<protein>
    <recommendedName>
        <fullName evidence="1">Small ribosomal subunit protein uS7</fullName>
    </recommendedName>
    <alternativeName>
        <fullName evidence="2">30S ribosomal protein S7</fullName>
    </alternativeName>
</protein>
<accession>B3PMF0</accession>
<proteinExistence type="inferred from homology"/>
<name>RS7_META1</name>
<gene>
    <name evidence="1" type="primary">rpsG</name>
    <name type="ordered locus">MARTH_orf313</name>
</gene>
<organism>
    <name type="scientific">Metamycoplasma arthritidis (strain 158L3-1)</name>
    <name type="common">Mycoplasma arthritidis</name>
    <dbReference type="NCBI Taxonomy" id="243272"/>
    <lineage>
        <taxon>Bacteria</taxon>
        <taxon>Bacillati</taxon>
        <taxon>Mycoplasmatota</taxon>
        <taxon>Mycoplasmoidales</taxon>
        <taxon>Metamycoplasmataceae</taxon>
        <taxon>Metamycoplasma</taxon>
    </lineage>
</organism>
<reference key="1">
    <citation type="journal article" date="2008" name="Infect. Immun.">
        <title>Genome of Mycoplasma arthritidis.</title>
        <authorList>
            <person name="Dybvig K."/>
            <person name="Zuhua C."/>
            <person name="Lao P."/>
            <person name="Jordan D.S."/>
            <person name="French C.T."/>
            <person name="Tu A.H."/>
            <person name="Loraine A.E."/>
        </authorList>
    </citation>
    <scope>NUCLEOTIDE SEQUENCE [LARGE SCALE GENOMIC DNA]</scope>
    <source>
        <strain>158L3-1</strain>
    </source>
</reference>
<sequence length="156" mass="17831">MARKRKTPTRDVLADPVFNSKIITKLINTIMLDGKKSVAESILYNAFAIIKNKTNKEPIEVFTVAIENISPQLEVRSRRVGGSNYQVPCEVSAKRKQTLALRWLIQYARLRNEKTMEEKLAGEIIDASNKMGGAIKKREDTYKMAESNKAFAHFRW</sequence>
<keyword id="KW-1185">Reference proteome</keyword>
<keyword id="KW-0687">Ribonucleoprotein</keyword>
<keyword id="KW-0689">Ribosomal protein</keyword>
<keyword id="KW-0694">RNA-binding</keyword>
<keyword id="KW-0699">rRNA-binding</keyword>
<keyword id="KW-0820">tRNA-binding</keyword>
<evidence type="ECO:0000255" key="1">
    <source>
        <dbReference type="HAMAP-Rule" id="MF_00480"/>
    </source>
</evidence>
<evidence type="ECO:0000305" key="2"/>
<feature type="chain" id="PRO_1000125970" description="Small ribosomal subunit protein uS7">
    <location>
        <begin position="1"/>
        <end position="156"/>
    </location>
</feature>
<dbReference type="EMBL" id="CP001047">
    <property type="protein sequence ID" value="ACF07202.1"/>
    <property type="molecule type" value="Genomic_DNA"/>
</dbReference>
<dbReference type="RefSeq" id="WP_012498159.1">
    <property type="nucleotide sequence ID" value="NC_011025.1"/>
</dbReference>
<dbReference type="SMR" id="B3PMF0"/>
<dbReference type="STRING" id="243272.MARTH_orf313"/>
<dbReference type="KEGG" id="mat:MARTH_orf313"/>
<dbReference type="eggNOG" id="COG0049">
    <property type="taxonomic scope" value="Bacteria"/>
</dbReference>
<dbReference type="HOGENOM" id="CLU_072226_1_1_14"/>
<dbReference type="Proteomes" id="UP000008812">
    <property type="component" value="Chromosome"/>
</dbReference>
<dbReference type="GO" id="GO:0015935">
    <property type="term" value="C:small ribosomal subunit"/>
    <property type="evidence" value="ECO:0007669"/>
    <property type="project" value="InterPro"/>
</dbReference>
<dbReference type="GO" id="GO:0019843">
    <property type="term" value="F:rRNA binding"/>
    <property type="evidence" value="ECO:0007669"/>
    <property type="project" value="UniProtKB-UniRule"/>
</dbReference>
<dbReference type="GO" id="GO:0003735">
    <property type="term" value="F:structural constituent of ribosome"/>
    <property type="evidence" value="ECO:0007669"/>
    <property type="project" value="InterPro"/>
</dbReference>
<dbReference type="GO" id="GO:0000049">
    <property type="term" value="F:tRNA binding"/>
    <property type="evidence" value="ECO:0007669"/>
    <property type="project" value="UniProtKB-UniRule"/>
</dbReference>
<dbReference type="GO" id="GO:0006412">
    <property type="term" value="P:translation"/>
    <property type="evidence" value="ECO:0007669"/>
    <property type="project" value="UniProtKB-UniRule"/>
</dbReference>
<dbReference type="CDD" id="cd14869">
    <property type="entry name" value="uS7_Bacteria"/>
    <property type="match status" value="1"/>
</dbReference>
<dbReference type="FunFam" id="1.10.455.10:FF:000001">
    <property type="entry name" value="30S ribosomal protein S7"/>
    <property type="match status" value="1"/>
</dbReference>
<dbReference type="Gene3D" id="1.10.455.10">
    <property type="entry name" value="Ribosomal protein S7 domain"/>
    <property type="match status" value="1"/>
</dbReference>
<dbReference type="HAMAP" id="MF_00480_B">
    <property type="entry name" value="Ribosomal_uS7_B"/>
    <property type="match status" value="1"/>
</dbReference>
<dbReference type="InterPro" id="IPR000235">
    <property type="entry name" value="Ribosomal_uS7"/>
</dbReference>
<dbReference type="InterPro" id="IPR005717">
    <property type="entry name" value="Ribosomal_uS7_bac/org-type"/>
</dbReference>
<dbReference type="InterPro" id="IPR020606">
    <property type="entry name" value="Ribosomal_uS7_CS"/>
</dbReference>
<dbReference type="InterPro" id="IPR023798">
    <property type="entry name" value="Ribosomal_uS7_dom"/>
</dbReference>
<dbReference type="InterPro" id="IPR036823">
    <property type="entry name" value="Ribosomal_uS7_dom_sf"/>
</dbReference>
<dbReference type="NCBIfam" id="TIGR01029">
    <property type="entry name" value="rpsG_bact"/>
    <property type="match status" value="1"/>
</dbReference>
<dbReference type="PANTHER" id="PTHR11205">
    <property type="entry name" value="RIBOSOMAL PROTEIN S7"/>
    <property type="match status" value="1"/>
</dbReference>
<dbReference type="Pfam" id="PF00177">
    <property type="entry name" value="Ribosomal_S7"/>
    <property type="match status" value="1"/>
</dbReference>
<dbReference type="PIRSF" id="PIRSF002122">
    <property type="entry name" value="RPS7p_RPS7a_RPS5e_RPS7o"/>
    <property type="match status" value="1"/>
</dbReference>
<dbReference type="SUPFAM" id="SSF47973">
    <property type="entry name" value="Ribosomal protein S7"/>
    <property type="match status" value="1"/>
</dbReference>
<dbReference type="PROSITE" id="PS00052">
    <property type="entry name" value="RIBOSOMAL_S7"/>
    <property type="match status" value="1"/>
</dbReference>
<comment type="function">
    <text evidence="1">One of the primary rRNA binding proteins, it binds directly to 16S rRNA where it nucleates assembly of the head domain of the 30S subunit. Is located at the subunit interface close to the decoding center, probably blocks exit of the E-site tRNA.</text>
</comment>
<comment type="subunit">
    <text evidence="1">Part of the 30S ribosomal subunit. Contacts proteins S9 and S11.</text>
</comment>
<comment type="similarity">
    <text evidence="1">Belongs to the universal ribosomal protein uS7 family.</text>
</comment>